<organism>
    <name type="scientific">Psychrobacter sp. (strain PRwf-1)</name>
    <dbReference type="NCBI Taxonomy" id="349106"/>
    <lineage>
        <taxon>Bacteria</taxon>
        <taxon>Pseudomonadati</taxon>
        <taxon>Pseudomonadota</taxon>
        <taxon>Gammaproteobacteria</taxon>
        <taxon>Moraxellales</taxon>
        <taxon>Moraxellaceae</taxon>
        <taxon>Psychrobacter</taxon>
    </lineage>
</organism>
<comment type="catalytic activity">
    <reaction evidence="1">
        <text>L-citrulline + L-aspartate + ATP = 2-(N(omega)-L-arginino)succinate + AMP + diphosphate + H(+)</text>
        <dbReference type="Rhea" id="RHEA:10932"/>
        <dbReference type="ChEBI" id="CHEBI:15378"/>
        <dbReference type="ChEBI" id="CHEBI:29991"/>
        <dbReference type="ChEBI" id="CHEBI:30616"/>
        <dbReference type="ChEBI" id="CHEBI:33019"/>
        <dbReference type="ChEBI" id="CHEBI:57472"/>
        <dbReference type="ChEBI" id="CHEBI:57743"/>
        <dbReference type="ChEBI" id="CHEBI:456215"/>
        <dbReference type="EC" id="6.3.4.5"/>
    </reaction>
</comment>
<comment type="pathway">
    <text evidence="1">Amino-acid biosynthesis; L-arginine biosynthesis; L-arginine from L-ornithine and carbamoyl phosphate: step 2/3.</text>
</comment>
<comment type="subunit">
    <text evidence="1">Homotetramer.</text>
</comment>
<comment type="subcellular location">
    <subcellularLocation>
        <location evidence="1">Cytoplasm</location>
    </subcellularLocation>
</comment>
<comment type="similarity">
    <text evidence="1">Belongs to the argininosuccinate synthase family. Type 1 subfamily.</text>
</comment>
<dbReference type="EC" id="6.3.4.5" evidence="1"/>
<dbReference type="EMBL" id="CP000713">
    <property type="protein sequence ID" value="ABQ94599.1"/>
    <property type="molecule type" value="Genomic_DNA"/>
</dbReference>
<dbReference type="SMR" id="A5WG08"/>
<dbReference type="STRING" id="349106.PsycPRwf_1659"/>
<dbReference type="KEGG" id="prw:PsycPRwf_1659"/>
<dbReference type="eggNOG" id="COG0137">
    <property type="taxonomic scope" value="Bacteria"/>
</dbReference>
<dbReference type="HOGENOM" id="CLU_032784_4_2_6"/>
<dbReference type="UniPathway" id="UPA00068">
    <property type="reaction ID" value="UER00113"/>
</dbReference>
<dbReference type="GO" id="GO:0005737">
    <property type="term" value="C:cytoplasm"/>
    <property type="evidence" value="ECO:0007669"/>
    <property type="project" value="UniProtKB-SubCell"/>
</dbReference>
<dbReference type="GO" id="GO:0004055">
    <property type="term" value="F:argininosuccinate synthase activity"/>
    <property type="evidence" value="ECO:0007669"/>
    <property type="project" value="UniProtKB-UniRule"/>
</dbReference>
<dbReference type="GO" id="GO:0005524">
    <property type="term" value="F:ATP binding"/>
    <property type="evidence" value="ECO:0007669"/>
    <property type="project" value="UniProtKB-UniRule"/>
</dbReference>
<dbReference type="GO" id="GO:0000053">
    <property type="term" value="P:argininosuccinate metabolic process"/>
    <property type="evidence" value="ECO:0007669"/>
    <property type="project" value="TreeGrafter"/>
</dbReference>
<dbReference type="GO" id="GO:0006526">
    <property type="term" value="P:L-arginine biosynthetic process"/>
    <property type="evidence" value="ECO:0007669"/>
    <property type="project" value="UniProtKB-UniRule"/>
</dbReference>
<dbReference type="GO" id="GO:0000050">
    <property type="term" value="P:urea cycle"/>
    <property type="evidence" value="ECO:0007669"/>
    <property type="project" value="TreeGrafter"/>
</dbReference>
<dbReference type="CDD" id="cd01999">
    <property type="entry name" value="ASS"/>
    <property type="match status" value="1"/>
</dbReference>
<dbReference type="FunFam" id="3.40.50.620:FF:000019">
    <property type="entry name" value="Argininosuccinate synthase"/>
    <property type="match status" value="1"/>
</dbReference>
<dbReference type="FunFam" id="3.90.1260.10:FF:000007">
    <property type="entry name" value="Argininosuccinate synthase"/>
    <property type="match status" value="1"/>
</dbReference>
<dbReference type="Gene3D" id="3.90.1260.10">
    <property type="entry name" value="Argininosuccinate synthetase, chain A, domain 2"/>
    <property type="match status" value="1"/>
</dbReference>
<dbReference type="Gene3D" id="3.40.50.620">
    <property type="entry name" value="HUPs"/>
    <property type="match status" value="1"/>
</dbReference>
<dbReference type="Gene3D" id="1.20.5.470">
    <property type="entry name" value="Single helix bin"/>
    <property type="match status" value="1"/>
</dbReference>
<dbReference type="HAMAP" id="MF_00005">
    <property type="entry name" value="Arg_succ_synth_type1"/>
    <property type="match status" value="1"/>
</dbReference>
<dbReference type="InterPro" id="IPR048268">
    <property type="entry name" value="Arginosuc_syn_C"/>
</dbReference>
<dbReference type="InterPro" id="IPR048267">
    <property type="entry name" value="Arginosuc_syn_N"/>
</dbReference>
<dbReference type="InterPro" id="IPR001518">
    <property type="entry name" value="Arginosuc_synth"/>
</dbReference>
<dbReference type="InterPro" id="IPR018223">
    <property type="entry name" value="Arginosuc_synth_CS"/>
</dbReference>
<dbReference type="InterPro" id="IPR023434">
    <property type="entry name" value="Arginosuc_synth_type_1_subfam"/>
</dbReference>
<dbReference type="InterPro" id="IPR024074">
    <property type="entry name" value="AS_cat/multimer_dom_body"/>
</dbReference>
<dbReference type="InterPro" id="IPR014729">
    <property type="entry name" value="Rossmann-like_a/b/a_fold"/>
</dbReference>
<dbReference type="NCBIfam" id="TIGR00032">
    <property type="entry name" value="argG"/>
    <property type="match status" value="1"/>
</dbReference>
<dbReference type="NCBIfam" id="NF001770">
    <property type="entry name" value="PRK00509.1"/>
    <property type="match status" value="1"/>
</dbReference>
<dbReference type="PANTHER" id="PTHR11587">
    <property type="entry name" value="ARGININOSUCCINATE SYNTHASE"/>
    <property type="match status" value="1"/>
</dbReference>
<dbReference type="PANTHER" id="PTHR11587:SF2">
    <property type="entry name" value="ARGININOSUCCINATE SYNTHASE"/>
    <property type="match status" value="1"/>
</dbReference>
<dbReference type="Pfam" id="PF20979">
    <property type="entry name" value="Arginosuc_syn_C"/>
    <property type="match status" value="1"/>
</dbReference>
<dbReference type="Pfam" id="PF00764">
    <property type="entry name" value="Arginosuc_synth"/>
    <property type="match status" value="1"/>
</dbReference>
<dbReference type="SUPFAM" id="SSF52402">
    <property type="entry name" value="Adenine nucleotide alpha hydrolases-like"/>
    <property type="match status" value="1"/>
</dbReference>
<dbReference type="SUPFAM" id="SSF69864">
    <property type="entry name" value="Argininosuccinate synthetase, C-terminal domain"/>
    <property type="match status" value="1"/>
</dbReference>
<dbReference type="PROSITE" id="PS00564">
    <property type="entry name" value="ARGININOSUCCIN_SYN_1"/>
    <property type="match status" value="1"/>
</dbReference>
<dbReference type="PROSITE" id="PS00565">
    <property type="entry name" value="ARGININOSUCCIN_SYN_2"/>
    <property type="match status" value="1"/>
</dbReference>
<gene>
    <name evidence="1" type="primary">argG</name>
    <name type="ordered locus">PsycPRwf_1659</name>
</gene>
<evidence type="ECO:0000255" key="1">
    <source>
        <dbReference type="HAMAP-Rule" id="MF_00005"/>
    </source>
</evidence>
<reference key="1">
    <citation type="submission" date="2007-05" db="EMBL/GenBank/DDBJ databases">
        <title>Complete sequence of chromosome of Psychrobacter sp. PRwf-1.</title>
        <authorList>
            <consortium name="US DOE Joint Genome Institute"/>
            <person name="Copeland A."/>
            <person name="Lucas S."/>
            <person name="Lapidus A."/>
            <person name="Barry K."/>
            <person name="Detter J.C."/>
            <person name="Glavina del Rio T."/>
            <person name="Hammon N."/>
            <person name="Israni S."/>
            <person name="Dalin E."/>
            <person name="Tice H."/>
            <person name="Pitluck S."/>
            <person name="Chain P."/>
            <person name="Malfatti S."/>
            <person name="Shin M."/>
            <person name="Vergez L."/>
            <person name="Schmutz J."/>
            <person name="Larimer F."/>
            <person name="Land M."/>
            <person name="Hauser L."/>
            <person name="Kyrpides N."/>
            <person name="Kim E."/>
            <person name="Tiedje J."/>
            <person name="Richardson P."/>
        </authorList>
    </citation>
    <scope>NUCLEOTIDE SEQUENCE [LARGE SCALE GENOMIC DNA]</scope>
    <source>
        <strain>PRwf-1</strain>
    </source>
</reference>
<protein>
    <recommendedName>
        <fullName evidence="1">Argininosuccinate synthase</fullName>
        <ecNumber evidence="1">6.3.4.5</ecNumber>
    </recommendedName>
    <alternativeName>
        <fullName evidence="1">Citrulline--aspartate ligase</fullName>
    </alternativeName>
</protein>
<sequence length="411" mass="46272">MSIENKDNINKIVLAYSGGLDTSIIAKWLQDTYDAEVITFTADIGQGEEVEPARAKAEAMGIKHIHIEDLRAEFARDYVFPMFRANAIYEGEYLLGTSIARPLIAKRLVEIAKEHNADAISHGATGKGNDQVRFELGAIALAPDVKTIAPWREWDLSSRESLMAYAKEHNIPIDFAANKKKSPYSMDANLLHISYEGDILEDPYAEAEDDMWRWSVSPEQAPDTPEYLELEYEKGDIVAINGEKLEPYEVMIKLNELGGKHGIGRLDIVENRYVGMKSRGCYETPAGTIMLKAHRGMESLTLDREAAHLKDELMPRYAKIIYNGYWFSPERQMLQALIDKSQEYVTGTVRVKLYKGNVSVVGRKSPYSLFDEKIATFEDDAGAYDQKDAEGFIRLNGLRLSIEASRGRDLS</sequence>
<keyword id="KW-0028">Amino-acid biosynthesis</keyword>
<keyword id="KW-0055">Arginine biosynthesis</keyword>
<keyword id="KW-0067">ATP-binding</keyword>
<keyword id="KW-0963">Cytoplasm</keyword>
<keyword id="KW-0436">Ligase</keyword>
<keyword id="KW-0547">Nucleotide-binding</keyword>
<feature type="chain" id="PRO_1000070915" description="Argininosuccinate synthase">
    <location>
        <begin position="1"/>
        <end position="411"/>
    </location>
</feature>
<feature type="binding site" evidence="1">
    <location>
        <begin position="15"/>
        <end position="23"/>
    </location>
    <ligand>
        <name>ATP</name>
        <dbReference type="ChEBI" id="CHEBI:30616"/>
    </ligand>
</feature>
<feature type="binding site" evidence="1">
    <location>
        <position position="42"/>
    </location>
    <ligand>
        <name>ATP</name>
        <dbReference type="ChEBI" id="CHEBI:30616"/>
    </ligand>
</feature>
<feature type="binding site" evidence="1">
    <location>
        <position position="93"/>
    </location>
    <ligand>
        <name>L-citrulline</name>
        <dbReference type="ChEBI" id="CHEBI:57743"/>
    </ligand>
</feature>
<feature type="binding site" evidence="1">
    <location>
        <position position="98"/>
    </location>
    <ligand>
        <name>L-citrulline</name>
        <dbReference type="ChEBI" id="CHEBI:57743"/>
    </ligand>
</feature>
<feature type="binding site" evidence="1">
    <location>
        <position position="123"/>
    </location>
    <ligand>
        <name>ATP</name>
        <dbReference type="ChEBI" id="CHEBI:30616"/>
    </ligand>
</feature>
<feature type="binding site" evidence="1">
    <location>
        <position position="125"/>
    </location>
    <ligand>
        <name>L-aspartate</name>
        <dbReference type="ChEBI" id="CHEBI:29991"/>
    </ligand>
</feature>
<feature type="binding site" evidence="1">
    <location>
        <position position="129"/>
    </location>
    <ligand>
        <name>L-aspartate</name>
        <dbReference type="ChEBI" id="CHEBI:29991"/>
    </ligand>
</feature>
<feature type="binding site" evidence="1">
    <location>
        <position position="129"/>
    </location>
    <ligand>
        <name>L-citrulline</name>
        <dbReference type="ChEBI" id="CHEBI:57743"/>
    </ligand>
</feature>
<feature type="binding site" evidence="1">
    <location>
        <position position="130"/>
    </location>
    <ligand>
        <name>L-aspartate</name>
        <dbReference type="ChEBI" id="CHEBI:29991"/>
    </ligand>
</feature>
<feature type="binding site" evidence="1">
    <location>
        <position position="133"/>
    </location>
    <ligand>
        <name>L-citrulline</name>
        <dbReference type="ChEBI" id="CHEBI:57743"/>
    </ligand>
</feature>
<feature type="binding site" evidence="1">
    <location>
        <position position="185"/>
    </location>
    <ligand>
        <name>L-citrulline</name>
        <dbReference type="ChEBI" id="CHEBI:57743"/>
    </ligand>
</feature>
<feature type="binding site" evidence="1">
    <location>
        <position position="194"/>
    </location>
    <ligand>
        <name>L-citrulline</name>
        <dbReference type="ChEBI" id="CHEBI:57743"/>
    </ligand>
</feature>
<feature type="binding site" evidence="1">
    <location>
        <position position="270"/>
    </location>
    <ligand>
        <name>L-citrulline</name>
        <dbReference type="ChEBI" id="CHEBI:57743"/>
    </ligand>
</feature>
<feature type="binding site" evidence="1">
    <location>
        <position position="282"/>
    </location>
    <ligand>
        <name>L-citrulline</name>
        <dbReference type="ChEBI" id="CHEBI:57743"/>
    </ligand>
</feature>
<accession>A5WG08</accession>
<proteinExistence type="inferred from homology"/>
<name>ASSY_PSYWF</name>